<organism>
    <name type="scientific">Francisella tularensis subsp. tularensis (strain WY96-3418)</name>
    <dbReference type="NCBI Taxonomy" id="418136"/>
    <lineage>
        <taxon>Bacteria</taxon>
        <taxon>Pseudomonadati</taxon>
        <taxon>Pseudomonadota</taxon>
        <taxon>Gammaproteobacteria</taxon>
        <taxon>Thiotrichales</taxon>
        <taxon>Francisellaceae</taxon>
        <taxon>Francisella</taxon>
    </lineage>
</organism>
<accession>A4IWA8</accession>
<keyword id="KW-0687">Ribonucleoprotein</keyword>
<keyword id="KW-0689">Ribosomal protein</keyword>
<feature type="chain" id="PRO_1000049680" description="Large ribosomal subunit protein bL19">
    <location>
        <begin position="1"/>
        <end position="115"/>
    </location>
</feature>
<protein>
    <recommendedName>
        <fullName evidence="1">Large ribosomal subunit protein bL19</fullName>
    </recommendedName>
    <alternativeName>
        <fullName evidence="2">50S ribosomal protein L19</fullName>
    </alternativeName>
</protein>
<evidence type="ECO:0000255" key="1">
    <source>
        <dbReference type="HAMAP-Rule" id="MF_00402"/>
    </source>
</evidence>
<evidence type="ECO:0000305" key="2"/>
<dbReference type="EMBL" id="CP000608">
    <property type="protein sequence ID" value="ABO46210.1"/>
    <property type="molecule type" value="Genomic_DNA"/>
</dbReference>
<dbReference type="RefSeq" id="WP_003024828.1">
    <property type="nucleotide sequence ID" value="NC_009257.1"/>
</dbReference>
<dbReference type="SMR" id="A4IWA8"/>
<dbReference type="KEGG" id="ftw:FTW_0243"/>
<dbReference type="HOGENOM" id="CLU_103507_2_2_6"/>
<dbReference type="GO" id="GO:0022625">
    <property type="term" value="C:cytosolic large ribosomal subunit"/>
    <property type="evidence" value="ECO:0007669"/>
    <property type="project" value="TreeGrafter"/>
</dbReference>
<dbReference type="GO" id="GO:0003735">
    <property type="term" value="F:structural constituent of ribosome"/>
    <property type="evidence" value="ECO:0007669"/>
    <property type="project" value="InterPro"/>
</dbReference>
<dbReference type="GO" id="GO:0006412">
    <property type="term" value="P:translation"/>
    <property type="evidence" value="ECO:0007669"/>
    <property type="project" value="UniProtKB-UniRule"/>
</dbReference>
<dbReference type="FunFam" id="2.30.30.790:FF:000001">
    <property type="entry name" value="50S ribosomal protein L19"/>
    <property type="match status" value="1"/>
</dbReference>
<dbReference type="Gene3D" id="2.30.30.790">
    <property type="match status" value="1"/>
</dbReference>
<dbReference type="HAMAP" id="MF_00402">
    <property type="entry name" value="Ribosomal_bL19"/>
    <property type="match status" value="1"/>
</dbReference>
<dbReference type="InterPro" id="IPR001857">
    <property type="entry name" value="Ribosomal_bL19"/>
</dbReference>
<dbReference type="InterPro" id="IPR018257">
    <property type="entry name" value="Ribosomal_bL19_CS"/>
</dbReference>
<dbReference type="InterPro" id="IPR038657">
    <property type="entry name" value="Ribosomal_bL19_sf"/>
</dbReference>
<dbReference type="InterPro" id="IPR008991">
    <property type="entry name" value="Translation_prot_SH3-like_sf"/>
</dbReference>
<dbReference type="NCBIfam" id="TIGR01024">
    <property type="entry name" value="rplS_bact"/>
    <property type="match status" value="1"/>
</dbReference>
<dbReference type="PANTHER" id="PTHR15680:SF9">
    <property type="entry name" value="LARGE RIBOSOMAL SUBUNIT PROTEIN BL19M"/>
    <property type="match status" value="1"/>
</dbReference>
<dbReference type="PANTHER" id="PTHR15680">
    <property type="entry name" value="RIBOSOMAL PROTEIN L19"/>
    <property type="match status" value="1"/>
</dbReference>
<dbReference type="Pfam" id="PF01245">
    <property type="entry name" value="Ribosomal_L19"/>
    <property type="match status" value="1"/>
</dbReference>
<dbReference type="PIRSF" id="PIRSF002191">
    <property type="entry name" value="Ribosomal_L19"/>
    <property type="match status" value="1"/>
</dbReference>
<dbReference type="PRINTS" id="PR00061">
    <property type="entry name" value="RIBOSOMALL19"/>
</dbReference>
<dbReference type="SUPFAM" id="SSF50104">
    <property type="entry name" value="Translation proteins SH3-like domain"/>
    <property type="match status" value="1"/>
</dbReference>
<dbReference type="PROSITE" id="PS01015">
    <property type="entry name" value="RIBOSOMAL_L19"/>
    <property type="match status" value="1"/>
</dbReference>
<name>RL19_FRATW</name>
<sequence length="115" mass="13262">MKNKFVELVEKSQLRTDLPEFNPGDSITVNLWIKEGDKQRIQAFKGFVLRKRNRGLHSAFTVRKMSSGVGVERTFQTHSPLIDSIIVEKRADVRRAKLYYMRGLTGKAARIKEKV</sequence>
<gene>
    <name evidence="1" type="primary">rplS</name>
    <name type="ordered locus">FTW_0243</name>
</gene>
<comment type="function">
    <text evidence="1">This protein is located at the 30S-50S ribosomal subunit interface and may play a role in the structure and function of the aminoacyl-tRNA binding site.</text>
</comment>
<comment type="similarity">
    <text evidence="1">Belongs to the bacterial ribosomal protein bL19 family.</text>
</comment>
<reference key="1">
    <citation type="journal article" date="2007" name="PLoS ONE">
        <title>Complete genomic characterization of a pathogenic A.II strain of Francisella tularensis subspecies tularensis.</title>
        <authorList>
            <person name="Beckstrom-Sternberg S.M."/>
            <person name="Auerbach R.K."/>
            <person name="Godbole S."/>
            <person name="Pearson J.V."/>
            <person name="Beckstrom-Sternberg J.S."/>
            <person name="Deng Z."/>
            <person name="Munk C."/>
            <person name="Kubota K."/>
            <person name="Zhou Y."/>
            <person name="Bruce D."/>
            <person name="Noronha J."/>
            <person name="Scheuermann R.H."/>
            <person name="Wang A."/>
            <person name="Wei X."/>
            <person name="Wang J."/>
            <person name="Hao J."/>
            <person name="Wagner D.M."/>
            <person name="Brettin T.S."/>
            <person name="Brown N."/>
            <person name="Gilna P."/>
            <person name="Keim P.S."/>
        </authorList>
    </citation>
    <scope>NUCLEOTIDE SEQUENCE [LARGE SCALE GENOMIC DNA]</scope>
    <source>
        <strain>WY96-3418</strain>
    </source>
</reference>
<proteinExistence type="inferred from homology"/>